<keyword id="KW-0167">Capsid protein</keyword>
<keyword id="KW-1035">Host cytoplasm</keyword>
<keyword id="KW-1037">Host cytoskeleton</keyword>
<keyword id="KW-1153">Inner capsid protein</keyword>
<keyword id="KW-1185">Reference proteome</keyword>
<keyword id="KW-0946">Virion</keyword>
<sequence length="649" mass="73419">MELPHDKAWAYLLLTPPPLRDYFIQLPKPATLQLALNRFAAYLEKQYLRDSLYMEKIVIGTHYNVRKNRVLQPRIFVSPSNYTRILSTFYDHPDLIAEVLPIQHLSKSQLKRGGLTKNVLTSGLPEMNNEQNPYAVFEVNTIDDLKACFAFPTEWLIDILTGRNSISLHYTIDRTSIPKWYAHLEARFQYSDGVTKSLTDADLRQHYIGVQPIPVTCEELLQKMNDASINGNTMYRVHGYESIVSSRMETVNDLVKASGKPYDVVNVQTMSSYSRSISKAINQAVTKDRHNKHVGSTKLKNSQGPRTTIFVMPPYITVDVVCSPMTIKPGLGPIQTKLLKSIVDQSPRRFRIAYAAKPQIEQDVLNKRIFSTDEGPESYFQGVELLTPEAKSLLTALPQLVGTFHYEKLSYAHFPSYRLTAGGYNVDYFKRGVTVIVARKHGGKGMVAKLIWKLGTPVIDSDDYGRIIKLVEAGLTIDDAVTQLFSMDYDQRNSTVSAFDEHMEMIVSQSKMKQEITYPRASDPRITAFADYYSKWFLKVPYSDYVASVKNFVTKNGLSGPNGIQSTNHYDTLVIQVHTLPEATQFLGVNNIIEVYPIIDSYIGMILRQQTSNTCAELLLARYYESIHLRNFDMLPVGVVASTLEALVG</sequence>
<organismHost>
    <name type="scientific">Cryphonectria parasitica</name>
    <name type="common">Chestnut blight fungus</name>
    <name type="synonym">Endothia parasitica</name>
    <dbReference type="NCBI Taxonomy" id="5116"/>
</organismHost>
<protein>
    <recommendedName>
        <fullName>Microtubule-associated protein VP6</fullName>
    </recommendedName>
</protein>
<name>VP6_MYRV9</name>
<comment type="function">
    <text evidence="1">Minor inner capsid component. Displays NTPase and RNA 5'-triphosphatase (RTPase) activities. May function as a cofactor of polymerase VP2. Associates with microtubules and plays a role in the formation, structural organization and morphology of viral inclusions, where the assembly of cores and the replication of viral RNA occur (By similarity).</text>
</comment>
<comment type="subcellular location">
    <subcellularLocation>
        <location evidence="2">Virion</location>
    </subcellularLocation>
    <subcellularLocation>
        <location evidence="1">Host cytoplasm</location>
        <location evidence="1">Host cytoskeleton</location>
    </subcellularLocation>
</comment>
<organism>
    <name type="scientific">Cryphonectria parasitica mycoreovirus 1 (strain 9B21)</name>
    <name type="common">CpMYRV-1</name>
    <dbReference type="NCBI Taxonomy" id="230407"/>
    <lineage>
        <taxon>Viruses</taxon>
        <taxon>Riboviria</taxon>
        <taxon>Orthornavirae</taxon>
        <taxon>Duplornaviricota</taxon>
        <taxon>Resentoviricetes</taxon>
        <taxon>Reovirales</taxon>
        <taxon>Spinareoviridae</taxon>
        <taxon>Mycoreovirus</taxon>
        <taxon>Mycoreovirus 1</taxon>
    </lineage>
</organism>
<reference key="1">
    <citation type="journal article" date="2004" name="J. Gen. Virol.">
        <title>Complete genome sequence of Mycoreovirus-1/Cp9B21, a member of a novel genus within the family Reoviridae, isolated from the chestnut blight fungus Cryphonectria parasitica.</title>
        <authorList>
            <person name="Suzuki N."/>
            <person name="Supyani S."/>
            <person name="Maruyama K."/>
            <person name="Hillman B.I."/>
        </authorList>
    </citation>
    <scope>NUCLEOTIDE SEQUENCE [GENOMIC RNA]</scope>
</reference>
<proteinExistence type="inferred from homology"/>
<accession>Q65YV0</accession>
<feature type="chain" id="PRO_0000403428" description="Microtubule-associated protein VP6">
    <location>
        <begin position="1"/>
        <end position="649"/>
    </location>
</feature>
<evidence type="ECO:0000250" key="1"/>
<evidence type="ECO:0000305" key="2"/>
<gene>
    <name type="primary">S6</name>
</gene>
<dbReference type="EMBL" id="AB179638">
    <property type="protein sequence ID" value="BAD51416.1"/>
    <property type="molecule type" value="Genomic_RNA"/>
</dbReference>
<dbReference type="RefSeq" id="YP_001936009.1">
    <property type="nucleotide sequence ID" value="NC_010748.1"/>
</dbReference>
<dbReference type="GeneID" id="6334548"/>
<dbReference type="KEGG" id="vg:6334548"/>
<dbReference type="Proteomes" id="UP000006719">
    <property type="component" value="Genome"/>
</dbReference>
<dbReference type="GO" id="GO:0030430">
    <property type="term" value="C:host cell cytoplasm"/>
    <property type="evidence" value="ECO:0007669"/>
    <property type="project" value="UniProtKB-KW"/>
</dbReference>
<dbReference type="GO" id="GO:0044163">
    <property type="term" value="C:host cytoskeleton"/>
    <property type="evidence" value="ECO:0007669"/>
    <property type="project" value="UniProtKB-SubCell"/>
</dbReference>
<dbReference type="GO" id="GO:0039625">
    <property type="term" value="C:viral inner capsid"/>
    <property type="evidence" value="ECO:0007669"/>
    <property type="project" value="UniProtKB-KW"/>
</dbReference>